<protein>
    <recommendedName>
        <fullName evidence="1">SsrA-binding protein</fullName>
    </recommendedName>
    <alternativeName>
        <fullName evidence="1">Small protein B</fullName>
    </alternativeName>
</protein>
<organism>
    <name type="scientific">Mycoplasma mycoides subsp. mycoides SC (strain CCUG 32753 / NCTC 10114 / PG1)</name>
    <dbReference type="NCBI Taxonomy" id="272632"/>
    <lineage>
        <taxon>Bacteria</taxon>
        <taxon>Bacillati</taxon>
        <taxon>Mycoplasmatota</taxon>
        <taxon>Mollicutes</taxon>
        <taxon>Mycoplasmataceae</taxon>
        <taxon>Mycoplasma</taxon>
    </lineage>
</organism>
<keyword id="KW-0963">Cytoplasm</keyword>
<keyword id="KW-1185">Reference proteome</keyword>
<keyword id="KW-0694">RNA-binding</keyword>
<reference key="1">
    <citation type="journal article" date="2004" name="Genome Res.">
        <title>The genome sequence of Mycoplasma mycoides subsp. mycoides SC type strain PG1T, the causative agent of contagious bovine pleuropneumonia (CBPP).</title>
        <authorList>
            <person name="Westberg J."/>
            <person name="Persson A."/>
            <person name="Holmberg A."/>
            <person name="Goesmann A."/>
            <person name="Lundeberg J."/>
            <person name="Johansson K.-E."/>
            <person name="Pettersson B."/>
            <person name="Uhlen M."/>
        </authorList>
    </citation>
    <scope>NUCLEOTIDE SEQUENCE [LARGE SCALE GENOMIC DNA]</scope>
    <source>
        <strain>CCUG 32753 / NCTC 10114 / PG1</strain>
    </source>
</reference>
<proteinExistence type="inferred from homology"/>
<gene>
    <name evidence="1" type="primary">smpB</name>
    <name type="ordered locus">MSC_0857</name>
</gene>
<name>SSRP_MYCMS</name>
<feature type="chain" id="PRO_0000102986" description="SsrA-binding protein">
    <location>
        <begin position="1"/>
        <end position="148"/>
    </location>
</feature>
<accession>Q6MSC1</accession>
<dbReference type="EMBL" id="BX293980">
    <property type="protein sequence ID" value="CAE77469.1"/>
    <property type="molecule type" value="Genomic_DNA"/>
</dbReference>
<dbReference type="RefSeq" id="NP_975827.1">
    <property type="nucleotide sequence ID" value="NC_005364.2"/>
</dbReference>
<dbReference type="RefSeq" id="WP_011167013.1">
    <property type="nucleotide sequence ID" value="NC_005364.2"/>
</dbReference>
<dbReference type="SMR" id="Q6MSC1"/>
<dbReference type="STRING" id="272632.MSC_0857"/>
<dbReference type="KEGG" id="mmy:MSC_0857"/>
<dbReference type="PATRIC" id="fig|272632.4.peg.923"/>
<dbReference type="eggNOG" id="COG0691">
    <property type="taxonomic scope" value="Bacteria"/>
</dbReference>
<dbReference type="HOGENOM" id="CLU_108953_0_1_14"/>
<dbReference type="Proteomes" id="UP000001016">
    <property type="component" value="Chromosome"/>
</dbReference>
<dbReference type="GO" id="GO:0005829">
    <property type="term" value="C:cytosol"/>
    <property type="evidence" value="ECO:0007669"/>
    <property type="project" value="TreeGrafter"/>
</dbReference>
<dbReference type="GO" id="GO:0003723">
    <property type="term" value="F:RNA binding"/>
    <property type="evidence" value="ECO:0007669"/>
    <property type="project" value="UniProtKB-UniRule"/>
</dbReference>
<dbReference type="GO" id="GO:0070929">
    <property type="term" value="P:trans-translation"/>
    <property type="evidence" value="ECO:0007669"/>
    <property type="project" value="UniProtKB-UniRule"/>
</dbReference>
<dbReference type="CDD" id="cd09294">
    <property type="entry name" value="SmpB"/>
    <property type="match status" value="1"/>
</dbReference>
<dbReference type="Gene3D" id="2.40.280.10">
    <property type="match status" value="1"/>
</dbReference>
<dbReference type="HAMAP" id="MF_00023">
    <property type="entry name" value="SmpB"/>
    <property type="match status" value="1"/>
</dbReference>
<dbReference type="InterPro" id="IPR023620">
    <property type="entry name" value="SmpB"/>
</dbReference>
<dbReference type="InterPro" id="IPR000037">
    <property type="entry name" value="SsrA-bd_prot"/>
</dbReference>
<dbReference type="InterPro" id="IPR020081">
    <property type="entry name" value="SsrA-bd_prot_CS"/>
</dbReference>
<dbReference type="NCBIfam" id="NF003843">
    <property type="entry name" value="PRK05422.1"/>
    <property type="match status" value="1"/>
</dbReference>
<dbReference type="NCBIfam" id="TIGR00086">
    <property type="entry name" value="smpB"/>
    <property type="match status" value="1"/>
</dbReference>
<dbReference type="PANTHER" id="PTHR30308:SF2">
    <property type="entry name" value="SSRA-BINDING PROTEIN"/>
    <property type="match status" value="1"/>
</dbReference>
<dbReference type="PANTHER" id="PTHR30308">
    <property type="entry name" value="TMRNA-BINDING COMPONENT OF TRANS-TRANSLATION TAGGING COMPLEX"/>
    <property type="match status" value="1"/>
</dbReference>
<dbReference type="Pfam" id="PF01668">
    <property type="entry name" value="SmpB"/>
    <property type="match status" value="1"/>
</dbReference>
<dbReference type="SUPFAM" id="SSF74982">
    <property type="entry name" value="Small protein B (SmpB)"/>
    <property type="match status" value="1"/>
</dbReference>
<dbReference type="PROSITE" id="PS01317">
    <property type="entry name" value="SSRP"/>
    <property type="match status" value="1"/>
</dbReference>
<comment type="function">
    <text evidence="1">Required for rescue of stalled ribosomes mediated by trans-translation. Binds to transfer-messenger RNA (tmRNA), required for stable association of tmRNA with ribosomes. tmRNA and SmpB together mimic tRNA shape, replacing the anticodon stem-loop with SmpB. tmRNA is encoded by the ssrA gene; the 2 termini fold to resemble tRNA(Ala) and it encodes a 'tag peptide', a short internal open reading frame. During trans-translation Ala-aminoacylated tmRNA acts like a tRNA, entering the A-site of stalled ribosomes, displacing the stalled mRNA. The ribosome then switches to translate the ORF on the tmRNA; the nascent peptide is terminated with the 'tag peptide' encoded by the tmRNA and targeted for degradation. The ribosome is freed to recommence translation, which seems to be the essential function of trans-translation.</text>
</comment>
<comment type="subcellular location">
    <subcellularLocation>
        <location evidence="1">Cytoplasm</location>
    </subcellularLocation>
    <text evidence="1">The tmRNA-SmpB complex associates with stalled 70S ribosomes.</text>
</comment>
<comment type="similarity">
    <text evidence="1">Belongs to the SmpB family.</text>
</comment>
<evidence type="ECO:0000255" key="1">
    <source>
        <dbReference type="HAMAP-Rule" id="MF_00023"/>
    </source>
</evidence>
<sequence>MSEHLIVKNKKAYFNYEIIQTYQAGIVLNGPEIKSIRNHDVSINEAFVLIRKKEIYILNMNVKKYQFANYIKGLEETRTRKLLLHKKEIIKILNKIKQENLTIIPVKLYFKNDYVKLEIALAKGKKLHDKRQTIKKRDTERKELKNYK</sequence>